<comment type="function">
    <text evidence="1">Catalyzes the last two sequential reactions in the de novo biosynthetic pathway for UDP-N-acetylglucosamine (UDP-GlcNAc). The C-terminal domain catalyzes the transfer of acetyl group from acetyl coenzyme A to glucosamine-1-phosphate (GlcN-1-P) to produce N-acetylglucosamine-1-phosphate (GlcNAc-1-P), which is converted into UDP-GlcNAc by the transfer of uridine 5-monophosphate (from uridine 5-triphosphate), a reaction catalyzed by the N-terminal domain.</text>
</comment>
<comment type="catalytic activity">
    <reaction evidence="1">
        <text>alpha-D-glucosamine 1-phosphate + acetyl-CoA = N-acetyl-alpha-D-glucosamine 1-phosphate + CoA + H(+)</text>
        <dbReference type="Rhea" id="RHEA:13725"/>
        <dbReference type="ChEBI" id="CHEBI:15378"/>
        <dbReference type="ChEBI" id="CHEBI:57287"/>
        <dbReference type="ChEBI" id="CHEBI:57288"/>
        <dbReference type="ChEBI" id="CHEBI:57776"/>
        <dbReference type="ChEBI" id="CHEBI:58516"/>
        <dbReference type="EC" id="2.3.1.157"/>
    </reaction>
</comment>
<comment type="catalytic activity">
    <reaction evidence="1">
        <text>N-acetyl-alpha-D-glucosamine 1-phosphate + UTP + H(+) = UDP-N-acetyl-alpha-D-glucosamine + diphosphate</text>
        <dbReference type="Rhea" id="RHEA:13509"/>
        <dbReference type="ChEBI" id="CHEBI:15378"/>
        <dbReference type="ChEBI" id="CHEBI:33019"/>
        <dbReference type="ChEBI" id="CHEBI:46398"/>
        <dbReference type="ChEBI" id="CHEBI:57705"/>
        <dbReference type="ChEBI" id="CHEBI:57776"/>
        <dbReference type="EC" id="2.7.7.23"/>
    </reaction>
</comment>
<comment type="cofactor">
    <cofactor evidence="1">
        <name>Mg(2+)</name>
        <dbReference type="ChEBI" id="CHEBI:18420"/>
    </cofactor>
    <text evidence="1">Binds 1 Mg(2+) ion per subunit.</text>
</comment>
<comment type="pathway">
    <text evidence="1">Nucleotide-sugar biosynthesis; UDP-N-acetyl-alpha-D-glucosamine biosynthesis; N-acetyl-alpha-D-glucosamine 1-phosphate from alpha-D-glucosamine 6-phosphate (route II): step 2/2.</text>
</comment>
<comment type="pathway">
    <text evidence="1">Nucleotide-sugar biosynthesis; UDP-N-acetyl-alpha-D-glucosamine biosynthesis; UDP-N-acetyl-alpha-D-glucosamine from N-acetyl-alpha-D-glucosamine 1-phosphate: step 1/1.</text>
</comment>
<comment type="pathway">
    <text evidence="1">Bacterial outer membrane biogenesis; LPS lipid A biosynthesis.</text>
</comment>
<comment type="subunit">
    <text evidence="1">Homotrimer.</text>
</comment>
<comment type="subcellular location">
    <subcellularLocation>
        <location evidence="1">Cytoplasm</location>
    </subcellularLocation>
</comment>
<comment type="similarity">
    <text evidence="1">In the N-terminal section; belongs to the N-acetylglucosamine-1-phosphate uridyltransferase family.</text>
</comment>
<comment type="similarity">
    <text evidence="1">In the C-terminal section; belongs to the transferase hexapeptide repeat family.</text>
</comment>
<comment type="sequence caution" evidence="2">
    <conflict type="erroneous initiation">
        <sequence resource="EMBL-CDS" id="ABE51005"/>
    </conflict>
</comment>
<proteinExistence type="inferred from homology"/>
<accession>Q1GXN2</accession>
<name>GLMU_METFK</name>
<reference key="1">
    <citation type="submission" date="2006-03" db="EMBL/GenBank/DDBJ databases">
        <title>Complete sequence of Methylobacillus flagellatus KT.</title>
        <authorList>
            <consortium name="US DOE Joint Genome Institute"/>
            <person name="Copeland A."/>
            <person name="Lucas S."/>
            <person name="Lapidus A."/>
            <person name="Barry K."/>
            <person name="Detter J.C."/>
            <person name="Glavina del Rio T."/>
            <person name="Hammon N."/>
            <person name="Israni S."/>
            <person name="Dalin E."/>
            <person name="Tice H."/>
            <person name="Pitluck S."/>
            <person name="Brettin T."/>
            <person name="Bruce D."/>
            <person name="Han C."/>
            <person name="Tapia R."/>
            <person name="Saunders E."/>
            <person name="Gilna P."/>
            <person name="Schmutz J."/>
            <person name="Larimer F."/>
            <person name="Land M."/>
            <person name="Kyrpides N."/>
            <person name="Anderson I."/>
            <person name="Richardson P."/>
        </authorList>
    </citation>
    <scope>NUCLEOTIDE SEQUENCE [LARGE SCALE GENOMIC DNA]</scope>
    <source>
        <strain>ATCC 51484 / DSM 6875 / VKM B-1610 / KT</strain>
    </source>
</reference>
<evidence type="ECO:0000255" key="1">
    <source>
        <dbReference type="HAMAP-Rule" id="MF_01631"/>
    </source>
</evidence>
<evidence type="ECO:0000305" key="2"/>
<gene>
    <name evidence="1" type="primary">glmU</name>
    <name type="ordered locus">Mfla_2742</name>
</gene>
<dbReference type="EC" id="2.7.7.23" evidence="1"/>
<dbReference type="EC" id="2.3.1.157" evidence="1"/>
<dbReference type="EMBL" id="CP000284">
    <property type="protein sequence ID" value="ABE51005.1"/>
    <property type="status" value="ALT_INIT"/>
    <property type="molecule type" value="Genomic_DNA"/>
</dbReference>
<dbReference type="SMR" id="Q1GXN2"/>
<dbReference type="STRING" id="265072.Mfla_2742"/>
<dbReference type="KEGG" id="mfa:Mfla_2742"/>
<dbReference type="eggNOG" id="COG1207">
    <property type="taxonomic scope" value="Bacteria"/>
</dbReference>
<dbReference type="HOGENOM" id="CLU_029499_15_2_4"/>
<dbReference type="UniPathway" id="UPA00113">
    <property type="reaction ID" value="UER00532"/>
</dbReference>
<dbReference type="UniPathway" id="UPA00113">
    <property type="reaction ID" value="UER00533"/>
</dbReference>
<dbReference type="UniPathway" id="UPA00973"/>
<dbReference type="Proteomes" id="UP000002440">
    <property type="component" value="Chromosome"/>
</dbReference>
<dbReference type="GO" id="GO:0005737">
    <property type="term" value="C:cytoplasm"/>
    <property type="evidence" value="ECO:0007669"/>
    <property type="project" value="UniProtKB-SubCell"/>
</dbReference>
<dbReference type="GO" id="GO:0016020">
    <property type="term" value="C:membrane"/>
    <property type="evidence" value="ECO:0007669"/>
    <property type="project" value="GOC"/>
</dbReference>
<dbReference type="GO" id="GO:0019134">
    <property type="term" value="F:glucosamine-1-phosphate N-acetyltransferase activity"/>
    <property type="evidence" value="ECO:0007669"/>
    <property type="project" value="UniProtKB-UniRule"/>
</dbReference>
<dbReference type="GO" id="GO:0000287">
    <property type="term" value="F:magnesium ion binding"/>
    <property type="evidence" value="ECO:0007669"/>
    <property type="project" value="UniProtKB-UniRule"/>
</dbReference>
<dbReference type="GO" id="GO:0003977">
    <property type="term" value="F:UDP-N-acetylglucosamine diphosphorylase activity"/>
    <property type="evidence" value="ECO:0007669"/>
    <property type="project" value="UniProtKB-UniRule"/>
</dbReference>
<dbReference type="GO" id="GO:0000902">
    <property type="term" value="P:cell morphogenesis"/>
    <property type="evidence" value="ECO:0007669"/>
    <property type="project" value="UniProtKB-UniRule"/>
</dbReference>
<dbReference type="GO" id="GO:0071555">
    <property type="term" value="P:cell wall organization"/>
    <property type="evidence" value="ECO:0007669"/>
    <property type="project" value="UniProtKB-KW"/>
</dbReference>
<dbReference type="GO" id="GO:0009245">
    <property type="term" value="P:lipid A biosynthetic process"/>
    <property type="evidence" value="ECO:0007669"/>
    <property type="project" value="UniProtKB-UniRule"/>
</dbReference>
<dbReference type="GO" id="GO:0009252">
    <property type="term" value="P:peptidoglycan biosynthetic process"/>
    <property type="evidence" value="ECO:0007669"/>
    <property type="project" value="UniProtKB-UniRule"/>
</dbReference>
<dbReference type="GO" id="GO:0008360">
    <property type="term" value="P:regulation of cell shape"/>
    <property type="evidence" value="ECO:0007669"/>
    <property type="project" value="UniProtKB-KW"/>
</dbReference>
<dbReference type="GO" id="GO:0006048">
    <property type="term" value="P:UDP-N-acetylglucosamine biosynthetic process"/>
    <property type="evidence" value="ECO:0007669"/>
    <property type="project" value="UniProtKB-UniPathway"/>
</dbReference>
<dbReference type="CDD" id="cd02540">
    <property type="entry name" value="GT2_GlmU_N_bac"/>
    <property type="match status" value="1"/>
</dbReference>
<dbReference type="CDD" id="cd03353">
    <property type="entry name" value="LbH_GlmU_C"/>
    <property type="match status" value="1"/>
</dbReference>
<dbReference type="Gene3D" id="2.160.10.10">
    <property type="entry name" value="Hexapeptide repeat proteins"/>
    <property type="match status" value="1"/>
</dbReference>
<dbReference type="Gene3D" id="3.90.550.10">
    <property type="entry name" value="Spore Coat Polysaccharide Biosynthesis Protein SpsA, Chain A"/>
    <property type="match status" value="1"/>
</dbReference>
<dbReference type="HAMAP" id="MF_01631">
    <property type="entry name" value="GlmU"/>
    <property type="match status" value="1"/>
</dbReference>
<dbReference type="InterPro" id="IPR005882">
    <property type="entry name" value="Bifunctional_GlmU"/>
</dbReference>
<dbReference type="InterPro" id="IPR050065">
    <property type="entry name" value="GlmU-like"/>
</dbReference>
<dbReference type="InterPro" id="IPR038009">
    <property type="entry name" value="GlmU_C_LbH"/>
</dbReference>
<dbReference type="InterPro" id="IPR001451">
    <property type="entry name" value="Hexapep"/>
</dbReference>
<dbReference type="InterPro" id="IPR025877">
    <property type="entry name" value="MobA-like_NTP_Trfase"/>
</dbReference>
<dbReference type="InterPro" id="IPR029044">
    <property type="entry name" value="Nucleotide-diphossugar_trans"/>
</dbReference>
<dbReference type="InterPro" id="IPR011004">
    <property type="entry name" value="Trimer_LpxA-like_sf"/>
</dbReference>
<dbReference type="NCBIfam" id="TIGR01173">
    <property type="entry name" value="glmU"/>
    <property type="match status" value="1"/>
</dbReference>
<dbReference type="PANTHER" id="PTHR43584:SF3">
    <property type="entry name" value="BIFUNCTIONAL PROTEIN GLMU"/>
    <property type="match status" value="1"/>
</dbReference>
<dbReference type="PANTHER" id="PTHR43584">
    <property type="entry name" value="NUCLEOTIDYL TRANSFERASE"/>
    <property type="match status" value="1"/>
</dbReference>
<dbReference type="Pfam" id="PF00132">
    <property type="entry name" value="Hexapep"/>
    <property type="match status" value="1"/>
</dbReference>
<dbReference type="Pfam" id="PF12804">
    <property type="entry name" value="NTP_transf_3"/>
    <property type="match status" value="1"/>
</dbReference>
<dbReference type="SUPFAM" id="SSF53448">
    <property type="entry name" value="Nucleotide-diphospho-sugar transferases"/>
    <property type="match status" value="1"/>
</dbReference>
<dbReference type="SUPFAM" id="SSF51161">
    <property type="entry name" value="Trimeric LpxA-like enzymes"/>
    <property type="match status" value="1"/>
</dbReference>
<protein>
    <recommendedName>
        <fullName evidence="1">Bifunctional protein GlmU</fullName>
    </recommendedName>
    <domain>
        <recommendedName>
            <fullName evidence="1">UDP-N-acetylglucosamine pyrophosphorylase</fullName>
            <ecNumber evidence="1">2.7.7.23</ecNumber>
        </recommendedName>
        <alternativeName>
            <fullName evidence="1">N-acetylglucosamine-1-phosphate uridyltransferase</fullName>
        </alternativeName>
    </domain>
    <domain>
        <recommendedName>
            <fullName evidence="1">Glucosamine-1-phosphate N-acetyltransferase</fullName>
            <ecNumber evidence="1">2.3.1.157</ecNumber>
        </recommendedName>
    </domain>
</protein>
<feature type="chain" id="PRO_0000263141" description="Bifunctional protein GlmU">
    <location>
        <begin position="1"/>
        <end position="458"/>
    </location>
</feature>
<feature type="region of interest" description="Pyrophosphorylase" evidence="1">
    <location>
        <begin position="1"/>
        <end position="230"/>
    </location>
</feature>
<feature type="region of interest" description="Linker" evidence="1">
    <location>
        <begin position="231"/>
        <end position="251"/>
    </location>
</feature>
<feature type="region of interest" description="N-acetyltransferase" evidence="1">
    <location>
        <begin position="252"/>
        <end position="458"/>
    </location>
</feature>
<feature type="active site" description="Proton acceptor" evidence="1">
    <location>
        <position position="364"/>
    </location>
</feature>
<feature type="binding site" evidence="1">
    <location>
        <begin position="14"/>
        <end position="17"/>
    </location>
    <ligand>
        <name>UDP-N-acetyl-alpha-D-glucosamine</name>
        <dbReference type="ChEBI" id="CHEBI:57705"/>
    </ligand>
</feature>
<feature type="binding site" evidence="1">
    <location>
        <position position="28"/>
    </location>
    <ligand>
        <name>UDP-N-acetyl-alpha-D-glucosamine</name>
        <dbReference type="ChEBI" id="CHEBI:57705"/>
    </ligand>
</feature>
<feature type="binding site" evidence="1">
    <location>
        <position position="79"/>
    </location>
    <ligand>
        <name>UDP-N-acetyl-alpha-D-glucosamine</name>
        <dbReference type="ChEBI" id="CHEBI:57705"/>
    </ligand>
</feature>
<feature type="binding site" evidence="1">
    <location>
        <begin position="84"/>
        <end position="85"/>
    </location>
    <ligand>
        <name>UDP-N-acetyl-alpha-D-glucosamine</name>
        <dbReference type="ChEBI" id="CHEBI:57705"/>
    </ligand>
</feature>
<feature type="binding site" evidence="1">
    <location>
        <position position="108"/>
    </location>
    <ligand>
        <name>Mg(2+)</name>
        <dbReference type="ChEBI" id="CHEBI:18420"/>
    </ligand>
</feature>
<feature type="binding site" evidence="1">
    <location>
        <position position="141"/>
    </location>
    <ligand>
        <name>UDP-N-acetyl-alpha-D-glucosamine</name>
        <dbReference type="ChEBI" id="CHEBI:57705"/>
    </ligand>
</feature>
<feature type="binding site" evidence="1">
    <location>
        <position position="155"/>
    </location>
    <ligand>
        <name>UDP-N-acetyl-alpha-D-glucosamine</name>
        <dbReference type="ChEBI" id="CHEBI:57705"/>
    </ligand>
</feature>
<feature type="binding site" evidence="1">
    <location>
        <position position="170"/>
    </location>
    <ligand>
        <name>UDP-N-acetyl-alpha-D-glucosamine</name>
        <dbReference type="ChEBI" id="CHEBI:57705"/>
    </ligand>
</feature>
<feature type="binding site" evidence="1">
    <location>
        <position position="228"/>
    </location>
    <ligand>
        <name>Mg(2+)</name>
        <dbReference type="ChEBI" id="CHEBI:18420"/>
    </ligand>
</feature>
<feature type="binding site" evidence="1">
    <location>
        <position position="228"/>
    </location>
    <ligand>
        <name>UDP-N-acetyl-alpha-D-glucosamine</name>
        <dbReference type="ChEBI" id="CHEBI:57705"/>
    </ligand>
</feature>
<feature type="binding site" evidence="1">
    <location>
        <position position="334"/>
    </location>
    <ligand>
        <name>UDP-N-acetyl-alpha-D-glucosamine</name>
        <dbReference type="ChEBI" id="CHEBI:57705"/>
    </ligand>
</feature>
<feature type="binding site" evidence="1">
    <location>
        <position position="352"/>
    </location>
    <ligand>
        <name>UDP-N-acetyl-alpha-D-glucosamine</name>
        <dbReference type="ChEBI" id="CHEBI:57705"/>
    </ligand>
</feature>
<feature type="binding site" evidence="1">
    <location>
        <position position="367"/>
    </location>
    <ligand>
        <name>UDP-N-acetyl-alpha-D-glucosamine</name>
        <dbReference type="ChEBI" id="CHEBI:57705"/>
    </ligand>
</feature>
<feature type="binding site" evidence="1">
    <location>
        <position position="378"/>
    </location>
    <ligand>
        <name>UDP-N-acetyl-alpha-D-glucosamine</name>
        <dbReference type="ChEBI" id="CHEBI:57705"/>
    </ligand>
</feature>
<feature type="binding site" evidence="1">
    <location>
        <position position="381"/>
    </location>
    <ligand>
        <name>acetyl-CoA</name>
        <dbReference type="ChEBI" id="CHEBI:57288"/>
    </ligand>
</feature>
<feature type="binding site" evidence="1">
    <location>
        <begin position="387"/>
        <end position="388"/>
    </location>
    <ligand>
        <name>acetyl-CoA</name>
        <dbReference type="ChEBI" id="CHEBI:57288"/>
    </ligand>
</feature>
<feature type="binding site" evidence="1">
    <location>
        <position position="406"/>
    </location>
    <ligand>
        <name>acetyl-CoA</name>
        <dbReference type="ChEBI" id="CHEBI:57288"/>
    </ligand>
</feature>
<feature type="binding site" evidence="1">
    <location>
        <position position="424"/>
    </location>
    <ligand>
        <name>acetyl-CoA</name>
        <dbReference type="ChEBI" id="CHEBI:57288"/>
    </ligand>
</feature>
<feature type="binding site" evidence="1">
    <location>
        <position position="441"/>
    </location>
    <ligand>
        <name>acetyl-CoA</name>
        <dbReference type="ChEBI" id="CHEBI:57288"/>
    </ligand>
</feature>
<organism>
    <name type="scientific">Methylobacillus flagellatus (strain ATCC 51484 / DSM 6875 / VKM B-1610 / KT)</name>
    <dbReference type="NCBI Taxonomy" id="265072"/>
    <lineage>
        <taxon>Bacteria</taxon>
        <taxon>Pseudomonadati</taxon>
        <taxon>Pseudomonadota</taxon>
        <taxon>Betaproteobacteria</taxon>
        <taxon>Nitrosomonadales</taxon>
        <taxon>Methylophilaceae</taxon>
        <taxon>Methylobacillus</taxon>
    </lineage>
</organism>
<keyword id="KW-0012">Acyltransferase</keyword>
<keyword id="KW-0133">Cell shape</keyword>
<keyword id="KW-0961">Cell wall biogenesis/degradation</keyword>
<keyword id="KW-0963">Cytoplasm</keyword>
<keyword id="KW-0460">Magnesium</keyword>
<keyword id="KW-0479">Metal-binding</keyword>
<keyword id="KW-0511">Multifunctional enzyme</keyword>
<keyword id="KW-0548">Nucleotidyltransferase</keyword>
<keyword id="KW-0573">Peptidoglycan synthesis</keyword>
<keyword id="KW-1185">Reference proteome</keyword>
<keyword id="KW-0677">Repeat</keyword>
<keyword id="KW-0808">Transferase</keyword>
<sequence length="458" mass="49203">MSLPTYSKLNIVILAAGKGTRMNSSKPKVLHALAGKPVLQHVLDTARRLNPSSIIVVYGFGGEIVPQALPADDIIWVKQAEQLGTGHAMQQALPYLEPDARTLILLGDVPLLTQESCTQLLTQQAALCLLTVSKDNPSGYGRIVRQGDAVKAIVEHKDAAEAQLAIREVNTGIMAAENTWLATWLPRLDNRNAQQEYYLTDIVAMAVADGQAVAAVQSNDEWQVAGINSKQDLAALERVYQGRYAARLLAKGVTLADPSRIDVRGELTTGRDVEIDVGCVFEGQVTLADNVRIGPYCVIRDATIGAGTTLAAYTHIDGATLAEDCRIGPYARLRPGTVLSDHAHIGNFVELKNAQVDSGSKINHLSYVGDATVGKQVNIGAGTITCNYDGVNKFRTVIEDNAFIGSDSQLVAPVTIKAGATIAAGSTITEDAPADKLTMSRVRQFTIENWKRPEKVKK</sequence>